<accession>B5ED84</accession>
<evidence type="ECO:0000255" key="1">
    <source>
        <dbReference type="HAMAP-Rule" id="MF_00255"/>
    </source>
</evidence>
<proteinExistence type="inferred from homology"/>
<keyword id="KW-0030">Aminoacyl-tRNA synthetase</keyword>
<keyword id="KW-0067">ATP-binding</keyword>
<keyword id="KW-0963">Cytoplasm</keyword>
<keyword id="KW-0436">Ligase</keyword>
<keyword id="KW-0547">Nucleotide-binding</keyword>
<keyword id="KW-0648">Protein biosynthesis</keyword>
<keyword id="KW-1185">Reference proteome</keyword>
<sequence length="687" mass="75710">MAKDLFLEIGCEEIPAGFVPKAMADMELLIKKEFDSARIEYGEIVTLGTPRRLVLAVKGVAERQPDAELTAMGPAKSHAYDADGNPTKAAQGFARGQGIDVSQLKLVTTEKGEYLAAVKSEIGRATAELLPELLPRLIGNIPFKKSMRWADFDVRFARPIHWIVALFDGKVVPFSFGNIDSGSASRGHRFMANTSFPVRDLAHYLEECERHFVIPDPNKRKEIIRAEIERVAKQAKGNVLPDEALLEQVSYLVEYPSAVHGTFSPDFLVVPREVLITSMREHQRYFSLVDDEGKLLPGFITINNTITEDPQVVVKGNERVLRARLSDARFFFDEDHKVRLEARVESLKSVVYQAKLGTSYEKMERFRELGKRLAQRLNPAVTKEVERAATLCKADLVSGMVGEFPEVQGIMGREYALHDGEEKAVANAIAEHYLPTQAGGELPASDIGAFVSLADKMDTICGCFSVGLIPTGSADPYALRRSALGIINIILDKGYREPLSDFVKASLDLLSAKATRPLAEVQKDVLDFFRGRFVNLMADRFPSDAVEAVVSVSFDDLVEAAAKIEALAGFRNRDDFGPLAVAFKRVCNIVKDGVDTPVSTELFQDAAEGELHQALTQVSGKVAAALKKADYLAALTEIATLKPAVDLFFEKVMVMAEDERVRQNRLALLTGIARLFGSLADFSRLSP</sequence>
<name>SYGB_CITBB</name>
<reference key="1">
    <citation type="submission" date="2008-07" db="EMBL/GenBank/DDBJ databases">
        <title>Complete sequence of Geobacter bemidjiensis BEM.</title>
        <authorList>
            <consortium name="US DOE Joint Genome Institute"/>
            <person name="Lucas S."/>
            <person name="Copeland A."/>
            <person name="Lapidus A."/>
            <person name="Glavina del Rio T."/>
            <person name="Dalin E."/>
            <person name="Tice H."/>
            <person name="Bruce D."/>
            <person name="Goodwin L."/>
            <person name="Pitluck S."/>
            <person name="Kiss H."/>
            <person name="Brettin T."/>
            <person name="Detter J.C."/>
            <person name="Han C."/>
            <person name="Kuske C.R."/>
            <person name="Schmutz J."/>
            <person name="Larimer F."/>
            <person name="Land M."/>
            <person name="Hauser L."/>
            <person name="Kyrpides N."/>
            <person name="Lykidis A."/>
            <person name="Lovley D."/>
            <person name="Richardson P."/>
        </authorList>
    </citation>
    <scope>NUCLEOTIDE SEQUENCE [LARGE SCALE GENOMIC DNA]</scope>
    <source>
        <strain>ATCC BAA-1014 / DSM 16622 / JCM 12645 / Bem</strain>
    </source>
</reference>
<dbReference type="EC" id="6.1.1.14" evidence="1"/>
<dbReference type="EMBL" id="CP001124">
    <property type="protein sequence ID" value="ACH37670.1"/>
    <property type="molecule type" value="Genomic_DNA"/>
</dbReference>
<dbReference type="RefSeq" id="WP_012529078.1">
    <property type="nucleotide sequence ID" value="NC_011146.1"/>
</dbReference>
<dbReference type="SMR" id="B5ED84"/>
<dbReference type="STRING" id="404380.Gbem_0642"/>
<dbReference type="KEGG" id="gbm:Gbem_0642"/>
<dbReference type="eggNOG" id="COG0751">
    <property type="taxonomic scope" value="Bacteria"/>
</dbReference>
<dbReference type="HOGENOM" id="CLU_007220_2_2_7"/>
<dbReference type="OrthoDB" id="9775440at2"/>
<dbReference type="Proteomes" id="UP000008825">
    <property type="component" value="Chromosome"/>
</dbReference>
<dbReference type="GO" id="GO:0005829">
    <property type="term" value="C:cytosol"/>
    <property type="evidence" value="ECO:0007669"/>
    <property type="project" value="TreeGrafter"/>
</dbReference>
<dbReference type="GO" id="GO:0004814">
    <property type="term" value="F:arginine-tRNA ligase activity"/>
    <property type="evidence" value="ECO:0007669"/>
    <property type="project" value="InterPro"/>
</dbReference>
<dbReference type="GO" id="GO:0005524">
    <property type="term" value="F:ATP binding"/>
    <property type="evidence" value="ECO:0007669"/>
    <property type="project" value="UniProtKB-UniRule"/>
</dbReference>
<dbReference type="GO" id="GO:0004820">
    <property type="term" value="F:glycine-tRNA ligase activity"/>
    <property type="evidence" value="ECO:0007669"/>
    <property type="project" value="UniProtKB-UniRule"/>
</dbReference>
<dbReference type="GO" id="GO:0006420">
    <property type="term" value="P:arginyl-tRNA aminoacylation"/>
    <property type="evidence" value="ECO:0007669"/>
    <property type="project" value="InterPro"/>
</dbReference>
<dbReference type="GO" id="GO:0006426">
    <property type="term" value="P:glycyl-tRNA aminoacylation"/>
    <property type="evidence" value="ECO:0007669"/>
    <property type="project" value="UniProtKB-UniRule"/>
</dbReference>
<dbReference type="HAMAP" id="MF_00255">
    <property type="entry name" value="Gly_tRNA_synth_beta"/>
    <property type="match status" value="1"/>
</dbReference>
<dbReference type="InterPro" id="IPR008909">
    <property type="entry name" value="DALR_anticod-bd"/>
</dbReference>
<dbReference type="InterPro" id="IPR015944">
    <property type="entry name" value="Gly-tRNA-synth_bsu"/>
</dbReference>
<dbReference type="InterPro" id="IPR006194">
    <property type="entry name" value="Gly-tRNA-synth_heterodimer"/>
</dbReference>
<dbReference type="NCBIfam" id="TIGR00211">
    <property type="entry name" value="glyS"/>
    <property type="match status" value="1"/>
</dbReference>
<dbReference type="PANTHER" id="PTHR30075:SF2">
    <property type="entry name" value="GLYCINE--TRNA LIGASE, CHLOROPLASTIC_MITOCHONDRIAL 2"/>
    <property type="match status" value="1"/>
</dbReference>
<dbReference type="PANTHER" id="PTHR30075">
    <property type="entry name" value="GLYCYL-TRNA SYNTHETASE"/>
    <property type="match status" value="1"/>
</dbReference>
<dbReference type="Pfam" id="PF05746">
    <property type="entry name" value="DALR_1"/>
    <property type="match status" value="1"/>
</dbReference>
<dbReference type="Pfam" id="PF02092">
    <property type="entry name" value="tRNA_synt_2f"/>
    <property type="match status" value="1"/>
</dbReference>
<dbReference type="PRINTS" id="PR01045">
    <property type="entry name" value="TRNASYNTHGB"/>
</dbReference>
<dbReference type="SUPFAM" id="SSF109604">
    <property type="entry name" value="HD-domain/PDEase-like"/>
    <property type="match status" value="1"/>
</dbReference>
<dbReference type="PROSITE" id="PS50861">
    <property type="entry name" value="AA_TRNA_LIGASE_II_GLYAB"/>
    <property type="match status" value="1"/>
</dbReference>
<gene>
    <name evidence="1" type="primary">glyS</name>
    <name type="ordered locus">Gbem_0642</name>
</gene>
<organism>
    <name type="scientific">Citrifermentans bemidjiense (strain ATCC BAA-1014 / DSM 16622 / JCM 12645 / Bem)</name>
    <name type="common">Geobacter bemidjiensis</name>
    <dbReference type="NCBI Taxonomy" id="404380"/>
    <lineage>
        <taxon>Bacteria</taxon>
        <taxon>Pseudomonadati</taxon>
        <taxon>Thermodesulfobacteriota</taxon>
        <taxon>Desulfuromonadia</taxon>
        <taxon>Geobacterales</taxon>
        <taxon>Geobacteraceae</taxon>
        <taxon>Citrifermentans</taxon>
    </lineage>
</organism>
<comment type="catalytic activity">
    <reaction evidence="1">
        <text>tRNA(Gly) + glycine + ATP = glycyl-tRNA(Gly) + AMP + diphosphate</text>
        <dbReference type="Rhea" id="RHEA:16013"/>
        <dbReference type="Rhea" id="RHEA-COMP:9664"/>
        <dbReference type="Rhea" id="RHEA-COMP:9683"/>
        <dbReference type="ChEBI" id="CHEBI:30616"/>
        <dbReference type="ChEBI" id="CHEBI:33019"/>
        <dbReference type="ChEBI" id="CHEBI:57305"/>
        <dbReference type="ChEBI" id="CHEBI:78442"/>
        <dbReference type="ChEBI" id="CHEBI:78522"/>
        <dbReference type="ChEBI" id="CHEBI:456215"/>
        <dbReference type="EC" id="6.1.1.14"/>
    </reaction>
</comment>
<comment type="subunit">
    <text evidence="1">Tetramer of two alpha and two beta subunits.</text>
</comment>
<comment type="subcellular location">
    <subcellularLocation>
        <location evidence="1">Cytoplasm</location>
    </subcellularLocation>
</comment>
<comment type="similarity">
    <text evidence="1">Belongs to the class-II aminoacyl-tRNA synthetase family.</text>
</comment>
<feature type="chain" id="PRO_1000101281" description="Glycine--tRNA ligase beta subunit">
    <location>
        <begin position="1"/>
        <end position="687"/>
    </location>
</feature>
<protein>
    <recommendedName>
        <fullName evidence="1">Glycine--tRNA ligase beta subunit</fullName>
        <ecNumber evidence="1">6.1.1.14</ecNumber>
    </recommendedName>
    <alternativeName>
        <fullName evidence="1">Glycyl-tRNA synthetase beta subunit</fullName>
        <shortName evidence="1">GlyRS</shortName>
    </alternativeName>
</protein>